<keyword id="KW-0963">Cytoplasm</keyword>
<keyword id="KW-0251">Elongation factor</keyword>
<keyword id="KW-0342">GTP-binding</keyword>
<keyword id="KW-0378">Hydrolase</keyword>
<keyword id="KW-0460">Magnesium</keyword>
<keyword id="KW-0479">Metal-binding</keyword>
<keyword id="KW-0547">Nucleotide-binding</keyword>
<keyword id="KW-0648">Protein biosynthesis</keyword>
<dbReference type="EC" id="3.6.5.3" evidence="2"/>
<dbReference type="EMBL" id="AE017221">
    <property type="protein sequence ID" value="AAS81672.1"/>
    <property type="molecule type" value="Genomic_DNA"/>
</dbReference>
<dbReference type="EMBL" id="AE017221">
    <property type="protein sequence ID" value="AAS82076.1"/>
    <property type="molecule type" value="Genomic_DNA"/>
</dbReference>
<dbReference type="RefSeq" id="WP_011173715.1">
    <property type="nucleotide sequence ID" value="NC_005835.1"/>
</dbReference>
<dbReference type="SMR" id="Q72GW4"/>
<dbReference type="KEGG" id="tth:TT_C1330"/>
<dbReference type="KEGG" id="tth:TT_C1734"/>
<dbReference type="eggNOG" id="COG0050">
    <property type="taxonomic scope" value="Bacteria"/>
</dbReference>
<dbReference type="HOGENOM" id="CLU_007265_0_1_0"/>
<dbReference type="OrthoDB" id="9804504at2"/>
<dbReference type="Proteomes" id="UP000000592">
    <property type="component" value="Chromosome"/>
</dbReference>
<dbReference type="GO" id="GO:0005829">
    <property type="term" value="C:cytosol"/>
    <property type="evidence" value="ECO:0007669"/>
    <property type="project" value="TreeGrafter"/>
</dbReference>
<dbReference type="GO" id="GO:0005525">
    <property type="term" value="F:GTP binding"/>
    <property type="evidence" value="ECO:0007669"/>
    <property type="project" value="UniProtKB-UniRule"/>
</dbReference>
<dbReference type="GO" id="GO:0003924">
    <property type="term" value="F:GTPase activity"/>
    <property type="evidence" value="ECO:0007669"/>
    <property type="project" value="InterPro"/>
</dbReference>
<dbReference type="GO" id="GO:0003746">
    <property type="term" value="F:translation elongation factor activity"/>
    <property type="evidence" value="ECO:0007669"/>
    <property type="project" value="UniProtKB-UniRule"/>
</dbReference>
<dbReference type="CDD" id="cd01884">
    <property type="entry name" value="EF_Tu"/>
    <property type="match status" value="1"/>
</dbReference>
<dbReference type="CDD" id="cd03697">
    <property type="entry name" value="EFTU_II"/>
    <property type="match status" value="1"/>
</dbReference>
<dbReference type="CDD" id="cd03707">
    <property type="entry name" value="EFTU_III"/>
    <property type="match status" value="1"/>
</dbReference>
<dbReference type="FunFam" id="2.40.30.10:FF:000001">
    <property type="entry name" value="Elongation factor Tu"/>
    <property type="match status" value="1"/>
</dbReference>
<dbReference type="FunFam" id="3.40.50.300:FF:000003">
    <property type="entry name" value="Elongation factor Tu"/>
    <property type="match status" value="1"/>
</dbReference>
<dbReference type="Gene3D" id="3.40.50.300">
    <property type="entry name" value="P-loop containing nucleotide triphosphate hydrolases"/>
    <property type="match status" value="1"/>
</dbReference>
<dbReference type="Gene3D" id="2.40.30.10">
    <property type="entry name" value="Translation factors"/>
    <property type="match status" value="2"/>
</dbReference>
<dbReference type="HAMAP" id="MF_00118_B">
    <property type="entry name" value="EF_Tu_B"/>
    <property type="match status" value="1"/>
</dbReference>
<dbReference type="InterPro" id="IPR041709">
    <property type="entry name" value="EF-Tu_GTP-bd"/>
</dbReference>
<dbReference type="InterPro" id="IPR050055">
    <property type="entry name" value="EF-Tu_GTPase"/>
</dbReference>
<dbReference type="InterPro" id="IPR004161">
    <property type="entry name" value="EFTu-like_2"/>
</dbReference>
<dbReference type="InterPro" id="IPR033720">
    <property type="entry name" value="EFTU_2"/>
</dbReference>
<dbReference type="InterPro" id="IPR031157">
    <property type="entry name" value="G_TR_CS"/>
</dbReference>
<dbReference type="InterPro" id="IPR027417">
    <property type="entry name" value="P-loop_NTPase"/>
</dbReference>
<dbReference type="InterPro" id="IPR005225">
    <property type="entry name" value="Small_GTP-bd"/>
</dbReference>
<dbReference type="InterPro" id="IPR000795">
    <property type="entry name" value="T_Tr_GTP-bd_dom"/>
</dbReference>
<dbReference type="InterPro" id="IPR009000">
    <property type="entry name" value="Transl_B-barrel_sf"/>
</dbReference>
<dbReference type="InterPro" id="IPR009001">
    <property type="entry name" value="Transl_elong_EF1A/Init_IF2_C"/>
</dbReference>
<dbReference type="InterPro" id="IPR004541">
    <property type="entry name" value="Transl_elong_EFTu/EF1A_bac/org"/>
</dbReference>
<dbReference type="InterPro" id="IPR004160">
    <property type="entry name" value="Transl_elong_EFTu/EF1A_C"/>
</dbReference>
<dbReference type="NCBIfam" id="TIGR00485">
    <property type="entry name" value="EF-Tu"/>
    <property type="match status" value="1"/>
</dbReference>
<dbReference type="NCBIfam" id="NF000766">
    <property type="entry name" value="PRK00049.1"/>
    <property type="match status" value="1"/>
</dbReference>
<dbReference type="NCBIfam" id="NF009372">
    <property type="entry name" value="PRK12735.1"/>
    <property type="match status" value="1"/>
</dbReference>
<dbReference type="NCBIfam" id="NF009373">
    <property type="entry name" value="PRK12736.1"/>
    <property type="match status" value="1"/>
</dbReference>
<dbReference type="NCBIfam" id="TIGR00231">
    <property type="entry name" value="small_GTP"/>
    <property type="match status" value="1"/>
</dbReference>
<dbReference type="PANTHER" id="PTHR43721:SF22">
    <property type="entry name" value="ELONGATION FACTOR TU, MITOCHONDRIAL"/>
    <property type="match status" value="1"/>
</dbReference>
<dbReference type="PANTHER" id="PTHR43721">
    <property type="entry name" value="ELONGATION FACTOR TU-RELATED"/>
    <property type="match status" value="1"/>
</dbReference>
<dbReference type="Pfam" id="PF00009">
    <property type="entry name" value="GTP_EFTU"/>
    <property type="match status" value="1"/>
</dbReference>
<dbReference type="Pfam" id="PF03144">
    <property type="entry name" value="GTP_EFTU_D2"/>
    <property type="match status" value="1"/>
</dbReference>
<dbReference type="Pfam" id="PF03143">
    <property type="entry name" value="GTP_EFTU_D3"/>
    <property type="match status" value="1"/>
</dbReference>
<dbReference type="PRINTS" id="PR00315">
    <property type="entry name" value="ELONGATNFCT"/>
</dbReference>
<dbReference type="SUPFAM" id="SSF50465">
    <property type="entry name" value="EF-Tu/eEF-1alpha/eIF2-gamma C-terminal domain"/>
    <property type="match status" value="1"/>
</dbReference>
<dbReference type="SUPFAM" id="SSF52540">
    <property type="entry name" value="P-loop containing nucleoside triphosphate hydrolases"/>
    <property type="match status" value="1"/>
</dbReference>
<dbReference type="SUPFAM" id="SSF50447">
    <property type="entry name" value="Translation proteins"/>
    <property type="match status" value="1"/>
</dbReference>
<dbReference type="PROSITE" id="PS00301">
    <property type="entry name" value="G_TR_1"/>
    <property type="match status" value="1"/>
</dbReference>
<dbReference type="PROSITE" id="PS51722">
    <property type="entry name" value="G_TR_2"/>
    <property type="match status" value="1"/>
</dbReference>
<sequence>MAKGEFIRTKPHVNVGTIGHVDHGKTTLTAALTYVAAAENPNVEVKDYGEIDKAPEERARGITINTAHVEYETAKRHYSHVDCPGHADYIKNMITGAAQMDGAILVVSAADGPMPQTREHILLARQVGVPYIVVFMNKVDMVDDPELLDLVEMEVRDLLNQYEFPGDEVPVIRGSALLALEQMHRNPKTRRGENEWVDKIWELLDAIDEYIPTPVRDVDKPFLMPVEDVFTITGRGTVATGRIERGKVKVGDEVEIVGLAPETRKTVVTGVEMHRKTLQEGIAGDNVGVLLRGVSREEVERGQVLAKPGSITPHTKFEASVYVLKKEEGGRHTGFFSGYRPQFYFRTTDVTGVVQLPPGVEMVMPGDNVTFTVELIKPVALEEGLRFAIREGGRTVGAGVVTKILE</sequence>
<protein>
    <recommendedName>
        <fullName evidence="2">Elongation factor Tu</fullName>
        <shortName evidence="2">EF-Tu</shortName>
        <ecNumber evidence="2">3.6.5.3</ecNumber>
    </recommendedName>
</protein>
<accession>Q72GW4</accession>
<name>EFTU_THET2</name>
<reference key="1">
    <citation type="journal article" date="2004" name="Nat. Biotechnol.">
        <title>The genome sequence of the extreme thermophile Thermus thermophilus.</title>
        <authorList>
            <person name="Henne A."/>
            <person name="Brueggemann H."/>
            <person name="Raasch C."/>
            <person name="Wiezer A."/>
            <person name="Hartsch T."/>
            <person name="Liesegang H."/>
            <person name="Johann A."/>
            <person name="Lienard T."/>
            <person name="Gohl O."/>
            <person name="Martinez-Arias R."/>
            <person name="Jacobi C."/>
            <person name="Starkuviene V."/>
            <person name="Schlenczeck S."/>
            <person name="Dencker S."/>
            <person name="Huber R."/>
            <person name="Klenk H.-P."/>
            <person name="Kramer W."/>
            <person name="Merkl R."/>
            <person name="Gottschalk G."/>
            <person name="Fritz H.-J."/>
        </authorList>
    </citation>
    <scope>NUCLEOTIDE SEQUENCE [LARGE SCALE GENOMIC DNA]</scope>
    <source>
        <strain>ATCC BAA-163 / DSM 7039 / HB27</strain>
    </source>
</reference>
<gene>
    <name evidence="2" type="primary">tuf1</name>
    <name type="ordered locus">TT_C1330</name>
</gene>
<gene>
    <name evidence="2" type="primary">tuf2</name>
    <name type="ordered locus">TT_C1734</name>
</gene>
<organism>
    <name type="scientific">Thermus thermophilus (strain ATCC BAA-163 / DSM 7039 / HB27)</name>
    <dbReference type="NCBI Taxonomy" id="262724"/>
    <lineage>
        <taxon>Bacteria</taxon>
        <taxon>Thermotogati</taxon>
        <taxon>Deinococcota</taxon>
        <taxon>Deinococci</taxon>
        <taxon>Thermales</taxon>
        <taxon>Thermaceae</taxon>
        <taxon>Thermus</taxon>
    </lineage>
</organism>
<evidence type="ECO:0000250" key="1"/>
<evidence type="ECO:0000255" key="2">
    <source>
        <dbReference type="HAMAP-Rule" id="MF_00118"/>
    </source>
</evidence>
<feature type="chain" id="PRO_0000337562" description="Elongation factor Tu">
    <location>
        <begin position="1"/>
        <end position="406"/>
    </location>
</feature>
<feature type="domain" description="tr-type G">
    <location>
        <begin position="10"/>
        <end position="215"/>
    </location>
</feature>
<feature type="region of interest" description="G1" evidence="1">
    <location>
        <begin position="19"/>
        <end position="26"/>
    </location>
</feature>
<feature type="region of interest" description="G2" evidence="1">
    <location>
        <begin position="61"/>
        <end position="65"/>
    </location>
</feature>
<feature type="region of interest" description="G3" evidence="1">
    <location>
        <begin position="82"/>
        <end position="85"/>
    </location>
</feature>
<feature type="region of interest" description="G4" evidence="1">
    <location>
        <begin position="137"/>
        <end position="140"/>
    </location>
</feature>
<feature type="region of interest" description="G5" evidence="1">
    <location>
        <begin position="175"/>
        <end position="177"/>
    </location>
</feature>
<feature type="binding site" evidence="2">
    <location>
        <begin position="19"/>
        <end position="26"/>
    </location>
    <ligand>
        <name>GTP</name>
        <dbReference type="ChEBI" id="CHEBI:37565"/>
    </ligand>
</feature>
<feature type="binding site" evidence="2">
    <location>
        <position position="26"/>
    </location>
    <ligand>
        <name>Mg(2+)</name>
        <dbReference type="ChEBI" id="CHEBI:18420"/>
    </ligand>
</feature>
<feature type="binding site" evidence="2">
    <location>
        <begin position="82"/>
        <end position="86"/>
    </location>
    <ligand>
        <name>GTP</name>
        <dbReference type="ChEBI" id="CHEBI:37565"/>
    </ligand>
</feature>
<feature type="binding site" evidence="2">
    <location>
        <begin position="137"/>
        <end position="140"/>
    </location>
    <ligand>
        <name>GTP</name>
        <dbReference type="ChEBI" id="CHEBI:37565"/>
    </ligand>
</feature>
<proteinExistence type="inferred from homology"/>
<comment type="function">
    <text evidence="2">GTP hydrolase that promotes the GTP-dependent binding of aminoacyl-tRNA to the A-site of ribosomes during protein biosynthesis.</text>
</comment>
<comment type="catalytic activity">
    <reaction evidence="2">
        <text>GTP + H2O = GDP + phosphate + H(+)</text>
        <dbReference type="Rhea" id="RHEA:19669"/>
        <dbReference type="ChEBI" id="CHEBI:15377"/>
        <dbReference type="ChEBI" id="CHEBI:15378"/>
        <dbReference type="ChEBI" id="CHEBI:37565"/>
        <dbReference type="ChEBI" id="CHEBI:43474"/>
        <dbReference type="ChEBI" id="CHEBI:58189"/>
        <dbReference type="EC" id="3.6.5.3"/>
    </reaction>
    <physiologicalReaction direction="left-to-right" evidence="2">
        <dbReference type="Rhea" id="RHEA:19670"/>
    </physiologicalReaction>
</comment>
<comment type="subunit">
    <text evidence="2">Monomer.</text>
</comment>
<comment type="subcellular location">
    <subcellularLocation>
        <location evidence="2">Cytoplasm</location>
    </subcellularLocation>
</comment>
<comment type="similarity">
    <text evidence="2">Belongs to the TRAFAC class translation factor GTPase superfamily. Classic translation factor GTPase family. EF-Tu/EF-1A subfamily.</text>
</comment>